<reference key="1">
    <citation type="journal article" date="1993" name="Mol. Microbiol.">
        <title>Molecular genetic analysis of the moa operon of Escherichia coli K-12 required for molybdenum cofactor biosynthesis.</title>
        <authorList>
            <person name="Rivers S.L."/>
            <person name="McNairn E."/>
            <person name="Blasco F."/>
            <person name="Giordano G."/>
            <person name="Boxer D.H."/>
        </authorList>
    </citation>
    <scope>NUCLEOTIDE SEQUENCE [GENOMIC DNA]</scope>
    <scope>PROTEIN SEQUENCE OF 2-11</scope>
    <source>
        <strain>K12 / MC4100 / ATCC 35695 / DSM 6574</strain>
    </source>
</reference>
<reference key="2">
    <citation type="journal article" date="1996" name="DNA Res.">
        <title>A 718-kb DNA sequence of the Escherichia coli K-12 genome corresponding to the 12.7-28.0 min region on the linkage map.</title>
        <authorList>
            <person name="Oshima T."/>
            <person name="Aiba H."/>
            <person name="Baba T."/>
            <person name="Fujita K."/>
            <person name="Hayashi K."/>
            <person name="Honjo A."/>
            <person name="Ikemoto K."/>
            <person name="Inada T."/>
            <person name="Itoh T."/>
            <person name="Kajihara M."/>
            <person name="Kanai K."/>
            <person name="Kashimoto K."/>
            <person name="Kimura S."/>
            <person name="Kitagawa M."/>
            <person name="Makino K."/>
            <person name="Masuda S."/>
            <person name="Miki T."/>
            <person name="Mizobuchi K."/>
            <person name="Mori H."/>
            <person name="Motomura K."/>
            <person name="Nakamura Y."/>
            <person name="Nashimoto H."/>
            <person name="Nishio Y."/>
            <person name="Saito N."/>
            <person name="Sampei G."/>
            <person name="Seki Y."/>
            <person name="Tagami H."/>
            <person name="Takemoto K."/>
            <person name="Wada C."/>
            <person name="Yamamoto Y."/>
            <person name="Yano M."/>
            <person name="Horiuchi T."/>
        </authorList>
    </citation>
    <scope>NUCLEOTIDE SEQUENCE [LARGE SCALE GENOMIC DNA]</scope>
    <source>
        <strain>K12 / W3110 / ATCC 27325 / DSM 5911</strain>
    </source>
</reference>
<reference key="3">
    <citation type="journal article" date="1997" name="Science">
        <title>The complete genome sequence of Escherichia coli K-12.</title>
        <authorList>
            <person name="Blattner F.R."/>
            <person name="Plunkett G. III"/>
            <person name="Bloch C.A."/>
            <person name="Perna N.T."/>
            <person name="Burland V."/>
            <person name="Riley M."/>
            <person name="Collado-Vides J."/>
            <person name="Glasner J.D."/>
            <person name="Rode C.K."/>
            <person name="Mayhew G.F."/>
            <person name="Gregor J."/>
            <person name="Davis N.W."/>
            <person name="Kirkpatrick H.A."/>
            <person name="Goeden M.A."/>
            <person name="Rose D.J."/>
            <person name="Mau B."/>
            <person name="Shao Y."/>
        </authorList>
    </citation>
    <scope>NUCLEOTIDE SEQUENCE [LARGE SCALE GENOMIC DNA]</scope>
    <source>
        <strain>K12 / MG1655 / ATCC 47076</strain>
    </source>
</reference>
<reference key="4">
    <citation type="journal article" date="2006" name="Mol. Syst. Biol.">
        <title>Highly accurate genome sequences of Escherichia coli K-12 strains MG1655 and W3110.</title>
        <authorList>
            <person name="Hayashi K."/>
            <person name="Morooka N."/>
            <person name="Yamamoto Y."/>
            <person name="Fujita K."/>
            <person name="Isono K."/>
            <person name="Choi S."/>
            <person name="Ohtsubo E."/>
            <person name="Baba T."/>
            <person name="Wanner B.L."/>
            <person name="Mori H."/>
            <person name="Horiuchi T."/>
        </authorList>
    </citation>
    <scope>NUCLEOTIDE SEQUENCE [LARGE SCALE GENOMIC DNA]</scope>
    <source>
        <strain>K12 / W3110 / ATCC 27325 / DSM 5911</strain>
    </source>
</reference>
<reference key="5">
    <citation type="journal article" date="1993" name="J. Biol. Chem.">
        <title>The biosynthesis of molybdopterin in Escherichia coli. Purification and characterization of the converting factor.</title>
        <authorList>
            <person name="Pitterle D.M."/>
            <person name="Rajagopalan K.V."/>
        </authorList>
    </citation>
    <scope>PROTEIN SEQUENCE OF 2-16</scope>
    <scope>CHARACTERIZATION</scope>
    <scope>MASS SPECTROMETRY</scope>
</reference>
<reference key="6">
    <citation type="journal article" date="2003" name="J. Biol. Chem.">
        <title>Mechanistic and mutational studies of Escherichia coli molybdopterin synthase clarify the final step of molybdopterin biosynthesis.</title>
        <authorList>
            <person name="Wuebbens M.M."/>
            <person name="Rajagopalan K.V."/>
        </authorList>
    </citation>
    <scope>CATALYTIC ACTIVITY</scope>
    <scope>KINETIC ANALYSIS</scope>
    <scope>DISCOVERY OF REACTION INTERMEDIATE</scope>
    <scope>MUTAGENESIS OF PHE-34; ARG-39; MET-115; LYS-119; LYS-126; GLU-128 AND ARG-140</scope>
</reference>
<reference key="7">
    <citation type="journal article" date="2001" name="Nat. Struct. Biol.">
        <title>Crystal structure of molybdopterin synthase and its evolutionary relationship to ubiquitin activation.</title>
        <authorList>
            <person name="Rudolph M.J."/>
            <person name="Wuebbens M.M."/>
            <person name="Rajagopalan K.V."/>
            <person name="Schindelin H."/>
        </authorList>
    </citation>
    <scope>X-RAY CRYSTALLOGRAPHY (1.45 ANGSTROMS) IN COMPLEXES WITH MOAD</scope>
    <scope>CROSS-LINKING TO MOAD</scope>
    <scope>MASS SPECTROMETRY</scope>
    <scope>SUBUNIT</scope>
</reference>
<reference key="8">
    <citation type="journal article" date="2003" name="J. Biol. Chem.">
        <title>Structural studies of molybdopterin synthase provide insights into its catalytic mechanism.</title>
        <authorList>
            <person name="Rudolph M.J."/>
            <person name="Wuebbens M.M."/>
            <person name="Turque O."/>
            <person name="Rajagopalan K.V."/>
            <person name="Schindelin H."/>
        </authorList>
    </citation>
    <scope>X-RAY CRYSTALLOGRAPHY (1.9 ANGSTROMS) OF APOENZYME AND IN COMPLEX WITH MOAD-THIOCARBOXYLATE</scope>
    <scope>REACTION MECHANISM</scope>
</reference>
<dbReference type="EC" id="2.8.1.12"/>
<dbReference type="EMBL" id="X70420">
    <property type="protein sequence ID" value="CAA49865.1"/>
    <property type="molecule type" value="Genomic_DNA"/>
</dbReference>
<dbReference type="EMBL" id="U00096">
    <property type="protein sequence ID" value="AAC73872.1"/>
    <property type="molecule type" value="Genomic_DNA"/>
</dbReference>
<dbReference type="EMBL" id="AP009048">
    <property type="protein sequence ID" value="BAA35443.1"/>
    <property type="molecule type" value="Genomic_DNA"/>
</dbReference>
<dbReference type="PIR" id="S35002">
    <property type="entry name" value="S31883"/>
</dbReference>
<dbReference type="RefSeq" id="NP_415306.1">
    <property type="nucleotide sequence ID" value="NC_000913.3"/>
</dbReference>
<dbReference type="RefSeq" id="WP_000852296.1">
    <property type="nucleotide sequence ID" value="NZ_SSZK01000002.1"/>
</dbReference>
<dbReference type="PDB" id="1FM0">
    <property type="method" value="X-ray"/>
    <property type="resolution" value="1.45 A"/>
    <property type="chains" value="E=1-150"/>
</dbReference>
<dbReference type="PDB" id="1FMA">
    <property type="method" value="X-ray"/>
    <property type="resolution" value="1.58 A"/>
    <property type="chains" value="E=1-150"/>
</dbReference>
<dbReference type="PDB" id="1NVI">
    <property type="method" value="X-ray"/>
    <property type="resolution" value="1.90 A"/>
    <property type="chains" value="E=1-150"/>
</dbReference>
<dbReference type="PDB" id="1NVJ">
    <property type="method" value="X-ray"/>
    <property type="resolution" value="2.15 A"/>
    <property type="chains" value="A/B/C/D/E/F=1-140"/>
</dbReference>
<dbReference type="PDB" id="3BII">
    <property type="method" value="X-ray"/>
    <property type="resolution" value="2.50 A"/>
    <property type="chains" value="E=2-150"/>
</dbReference>
<dbReference type="PDBsum" id="1FM0"/>
<dbReference type="PDBsum" id="1FMA"/>
<dbReference type="PDBsum" id="1NVI"/>
<dbReference type="PDBsum" id="1NVJ"/>
<dbReference type="PDBsum" id="3BII"/>
<dbReference type="SMR" id="P30749"/>
<dbReference type="BioGRID" id="4262180">
    <property type="interactions" value="27"/>
</dbReference>
<dbReference type="BioGRID" id="849773">
    <property type="interactions" value="10"/>
</dbReference>
<dbReference type="ComplexPortal" id="CPX-1970">
    <property type="entry name" value="Molybdopterin synthase complex"/>
</dbReference>
<dbReference type="DIP" id="DIP-10232N"/>
<dbReference type="FunCoup" id="P30749">
    <property type="interactions" value="787"/>
</dbReference>
<dbReference type="IntAct" id="P30749">
    <property type="interactions" value="21"/>
</dbReference>
<dbReference type="STRING" id="511145.b0785"/>
<dbReference type="DrugBank" id="DB01942">
    <property type="generic name" value="Formic acid"/>
</dbReference>
<dbReference type="jPOST" id="P30749"/>
<dbReference type="PaxDb" id="511145-b0785"/>
<dbReference type="EnsemblBacteria" id="AAC73872">
    <property type="protein sequence ID" value="AAC73872"/>
    <property type="gene ID" value="b0785"/>
</dbReference>
<dbReference type="GeneID" id="945399"/>
<dbReference type="KEGG" id="ecj:JW0768"/>
<dbReference type="KEGG" id="eco:b0785"/>
<dbReference type="KEGG" id="ecoc:C3026_04975"/>
<dbReference type="PATRIC" id="fig|1411691.4.peg.1493"/>
<dbReference type="EchoBASE" id="EB1555"/>
<dbReference type="eggNOG" id="COG0314">
    <property type="taxonomic scope" value="Bacteria"/>
</dbReference>
<dbReference type="HOGENOM" id="CLU_089568_2_1_6"/>
<dbReference type="InParanoid" id="P30749"/>
<dbReference type="OMA" id="WKHQFFA"/>
<dbReference type="OrthoDB" id="9803224at2"/>
<dbReference type="PhylomeDB" id="P30749"/>
<dbReference type="BioCyc" id="EcoCyc:EG11598-MONOMER"/>
<dbReference type="BioCyc" id="MetaCyc:EG11598-MONOMER"/>
<dbReference type="BRENDA" id="2.8.1.12">
    <property type="organism ID" value="2026"/>
</dbReference>
<dbReference type="UniPathway" id="UPA00344"/>
<dbReference type="EvolutionaryTrace" id="P30749"/>
<dbReference type="PRO" id="PR:P30749"/>
<dbReference type="Proteomes" id="UP000000625">
    <property type="component" value="Chromosome"/>
</dbReference>
<dbReference type="GO" id="GO:0005829">
    <property type="term" value="C:cytosol"/>
    <property type="evidence" value="ECO:0000318"/>
    <property type="project" value="GO_Central"/>
</dbReference>
<dbReference type="GO" id="GO:1990140">
    <property type="term" value="C:molybdopterin synthase complex"/>
    <property type="evidence" value="ECO:0000353"/>
    <property type="project" value="ComplexPortal"/>
</dbReference>
<dbReference type="GO" id="GO:0030366">
    <property type="term" value="F:molybdopterin synthase activity"/>
    <property type="evidence" value="ECO:0007669"/>
    <property type="project" value="UniProtKB-EC"/>
</dbReference>
<dbReference type="GO" id="GO:0042803">
    <property type="term" value="F:protein homodimerization activity"/>
    <property type="evidence" value="ECO:0000353"/>
    <property type="project" value="EcoCyc"/>
</dbReference>
<dbReference type="GO" id="GO:0006777">
    <property type="term" value="P:Mo-molybdopterin cofactor biosynthetic process"/>
    <property type="evidence" value="ECO:0000314"/>
    <property type="project" value="ComplexPortal"/>
</dbReference>
<dbReference type="CDD" id="cd00756">
    <property type="entry name" value="MoaE"/>
    <property type="match status" value="1"/>
</dbReference>
<dbReference type="FunFam" id="3.90.1170.40:FF:000001">
    <property type="entry name" value="Molybdopterin synthase catalytic subunit MoaE"/>
    <property type="match status" value="1"/>
</dbReference>
<dbReference type="Gene3D" id="3.90.1170.40">
    <property type="entry name" value="Molybdopterin biosynthesis MoaE subunit"/>
    <property type="match status" value="1"/>
</dbReference>
<dbReference type="InterPro" id="IPR036563">
    <property type="entry name" value="MoaE_sf"/>
</dbReference>
<dbReference type="InterPro" id="IPR003448">
    <property type="entry name" value="Mopterin_biosynth_MoaE"/>
</dbReference>
<dbReference type="NCBIfam" id="NF007959">
    <property type="entry name" value="PRK10678.1"/>
    <property type="match status" value="1"/>
</dbReference>
<dbReference type="PANTHER" id="PTHR23404">
    <property type="entry name" value="MOLYBDOPTERIN SYNTHASE RELATED"/>
    <property type="match status" value="1"/>
</dbReference>
<dbReference type="Pfam" id="PF02391">
    <property type="entry name" value="MoaE"/>
    <property type="match status" value="1"/>
</dbReference>
<dbReference type="SUPFAM" id="SSF54690">
    <property type="entry name" value="Molybdopterin synthase subunit MoaE"/>
    <property type="match status" value="1"/>
</dbReference>
<feature type="initiator methionine" description="Removed" evidence="5 6">
    <location>
        <position position="1"/>
    </location>
</feature>
<feature type="chain" id="PRO_0000163082" description="Molybdopterin synthase catalytic subunit">
    <location>
        <begin position="2"/>
        <end position="150"/>
    </location>
</feature>
<feature type="binding site" evidence="1">
    <location>
        <begin position="37"/>
        <end position="39"/>
    </location>
    <ligand>
        <name>substrate</name>
    </ligand>
</feature>
<feature type="binding site" evidence="1">
    <location>
        <begin position="103"/>
        <end position="104"/>
    </location>
    <ligand>
        <name>substrate</name>
    </ligand>
</feature>
<feature type="binding site" evidence="1">
    <location>
        <position position="119"/>
    </location>
    <ligand>
        <name>substrate</name>
    </ligand>
</feature>
<feature type="binding site" evidence="1">
    <location>
        <begin position="126"/>
        <end position="128"/>
    </location>
    <ligand>
        <name>substrate</name>
    </ligand>
</feature>
<feature type="cross-link" description="Glycyl lysine isopeptide (Lys-Gly) (interchain with G-Cter in MoaD)">
    <location>
        <position position="119"/>
    </location>
</feature>
<feature type="mutagenesis site" description="4-fold lower activity than wild-type." evidence="3">
    <original>F</original>
    <variation>A</variation>
    <location>
        <position position="34"/>
    </location>
</feature>
<feature type="mutagenesis site" description="24-fold lower activity than wild-type." evidence="3">
    <original>R</original>
    <variation>A</variation>
    <location>
        <position position="39"/>
    </location>
</feature>
<feature type="mutagenesis site" description="4-fold lower activity than wild-type." evidence="3">
    <original>M</original>
    <variation>A</variation>
    <location>
        <position position="115"/>
    </location>
</feature>
<feature type="mutagenesis site" description="No activity." evidence="3">
    <original>K</original>
    <variation>A</variation>
    <location>
        <position position="119"/>
    </location>
</feature>
<feature type="mutagenesis site" description="58-fold lower activity than wild-type. Accumulates large quantities of reaction intermediate." evidence="3">
    <original>K</original>
    <variation>A</variation>
    <location>
        <position position="126"/>
    </location>
</feature>
<feature type="mutagenesis site" description="17-fold lower activity than wild-type." evidence="3">
    <original>E</original>
    <variation>K</variation>
    <location>
        <position position="128"/>
    </location>
</feature>
<feature type="mutagenesis site" description="2-fold lower activity than wild-type." evidence="3">
    <original>R</original>
    <variation>A</variation>
    <location>
        <position position="140"/>
    </location>
</feature>
<feature type="strand" evidence="8">
    <location>
        <begin position="4"/>
        <end position="11"/>
    </location>
</feature>
<feature type="helix" evidence="8">
    <location>
        <begin position="15"/>
        <end position="22"/>
    </location>
</feature>
<feature type="strand" evidence="8">
    <location>
        <begin position="30"/>
        <end position="37"/>
    </location>
</feature>
<feature type="strand" evidence="8">
    <location>
        <begin position="50"/>
        <end position="54"/>
    </location>
</feature>
<feature type="helix" evidence="8">
    <location>
        <begin position="56"/>
        <end position="73"/>
    </location>
</feature>
<feature type="strand" evidence="8">
    <location>
        <begin position="76"/>
        <end position="84"/>
    </location>
</feature>
<feature type="strand" evidence="8">
    <location>
        <begin position="86"/>
        <end position="88"/>
    </location>
</feature>
<feature type="strand" evidence="8">
    <location>
        <begin position="93"/>
        <end position="103"/>
    </location>
</feature>
<feature type="helix" evidence="8">
    <location>
        <begin position="104"/>
        <end position="121"/>
    </location>
</feature>
<feature type="strand" evidence="8">
    <location>
        <begin position="124"/>
        <end position="130"/>
    </location>
</feature>
<feature type="strand" evidence="8">
    <location>
        <begin position="133"/>
        <end position="136"/>
    </location>
</feature>
<feature type="helix" evidence="8">
    <location>
        <begin position="141"/>
        <end position="148"/>
    </location>
</feature>
<accession>P30749</accession>
<evidence type="ECO:0000250" key="1"/>
<evidence type="ECO:0000269" key="2">
    <source>
    </source>
</evidence>
<evidence type="ECO:0000269" key="3">
    <source>
    </source>
</evidence>
<evidence type="ECO:0000269" key="4">
    <source>
    </source>
</evidence>
<evidence type="ECO:0000269" key="5">
    <source>
    </source>
</evidence>
<evidence type="ECO:0000269" key="6">
    <source>
    </source>
</evidence>
<evidence type="ECO:0000305" key="7"/>
<evidence type="ECO:0007829" key="8">
    <source>
        <dbReference type="PDB" id="1FM0"/>
    </source>
</evidence>
<organism>
    <name type="scientific">Escherichia coli (strain K12)</name>
    <dbReference type="NCBI Taxonomy" id="83333"/>
    <lineage>
        <taxon>Bacteria</taxon>
        <taxon>Pseudomonadati</taxon>
        <taxon>Pseudomonadota</taxon>
        <taxon>Gammaproteobacteria</taxon>
        <taxon>Enterobacterales</taxon>
        <taxon>Enterobacteriaceae</taxon>
        <taxon>Escherichia</taxon>
    </lineage>
</organism>
<comment type="function">
    <text>Converts molybdopterin precursor Z to molybdopterin. This requires the incorporation of two sulfur atoms into precursor Z to generate a dithiolene group. The sulfur is provided by MoaD.</text>
</comment>
<comment type="catalytic activity">
    <reaction evidence="3">
        <text>2 [molybdopterin-synthase sulfur-carrier protein]-C-terminal-Gly-aminoethanethioate + cyclic pyranopterin phosphate + H2O = molybdopterin + 2 [molybdopterin-synthase sulfur-carrier protein]-C-terminal Gly-Gly + 2 H(+)</text>
        <dbReference type="Rhea" id="RHEA:26333"/>
        <dbReference type="Rhea" id="RHEA-COMP:12202"/>
        <dbReference type="Rhea" id="RHEA-COMP:19907"/>
        <dbReference type="ChEBI" id="CHEBI:15377"/>
        <dbReference type="ChEBI" id="CHEBI:15378"/>
        <dbReference type="ChEBI" id="CHEBI:58698"/>
        <dbReference type="ChEBI" id="CHEBI:59648"/>
        <dbReference type="ChEBI" id="CHEBI:90778"/>
        <dbReference type="ChEBI" id="CHEBI:232372"/>
        <dbReference type="EC" id="2.8.1.12"/>
    </reaction>
</comment>
<comment type="pathway">
    <text>Cofactor biosynthesis; molybdopterin biosynthesis.</text>
</comment>
<comment type="subunit">
    <text evidence="2 4">Heterotetramer of 2 MoaD subunits and 2 MoaE subunits. Also stable as homodimer. The enzyme changes between these two forms during catalysis.</text>
</comment>
<comment type="interaction">
    <interactant intactId="EBI-554376">
        <id>P30749</id>
    </interactant>
    <interactant intactId="EBI-554366">
        <id>P30748</id>
        <label>moaD</label>
    </interactant>
    <organismsDiffer>false</organismsDiffer>
    <experiments>8</experiments>
</comment>
<comment type="interaction">
    <interactant intactId="EBI-554376">
        <id>P30749</id>
    </interactant>
    <interactant intactId="EBI-879965">
        <id>P32125</id>
        <label>mobB</label>
    </interactant>
    <organismsDiffer>false</organismsDiffer>
    <experiments>2</experiments>
</comment>
<comment type="induction">
    <text>By anaerobiosis, repressed by the molybdenum cofactor.</text>
</comment>
<comment type="mass spectrometry" mass="16849.7" error="0.7" method="Electrospray" evidence="6"/>
<comment type="mass spectrometry" mass="16851.0" method="API" evidence="2"/>
<comment type="miscellaneous">
    <text>The cross-link is not seen in all structures of the MoaE-MoaD complex.</text>
</comment>
<comment type="similarity">
    <text evidence="7">Belongs to the MoaE family.</text>
</comment>
<gene>
    <name type="primary">moaE</name>
    <name type="synonym">chlA5</name>
    <name type="ordered locus">b0785</name>
    <name type="ordered locus">JW0768</name>
</gene>
<protein>
    <recommendedName>
        <fullName>Molybdopterin synthase catalytic subunit</fullName>
        <ecNumber>2.8.1.12</ecNumber>
    </recommendedName>
    <alternativeName>
        <fullName>MPT synthase subunit 2</fullName>
    </alternativeName>
    <alternativeName>
        <fullName>Molybdenum cofactor biosynthesis protein E</fullName>
    </alternativeName>
    <alternativeName>
        <fullName>Molybdopterin-converting factor large subunit</fullName>
    </alternativeName>
    <alternativeName>
        <fullName>Molybdopterin-converting factor subunit 2</fullName>
    </alternativeName>
</protein>
<sequence length="150" mass="16981">MAETKIVVGPQPFSVGEEYPWLAERDEDGAVVTFTGKVRNHNLGDSVNALTLEHYPGMTEKALAEIVDEARNRWPLGRVTVIHRIGELWPGDEIVFVGVTSAHRSSAFEAGQFIMDYLKTRAPFWKREATPEGDRWVEARESDQQAAKRW</sequence>
<keyword id="KW-0002">3D-structure</keyword>
<keyword id="KW-0903">Direct protein sequencing</keyword>
<keyword id="KW-1017">Isopeptide bond</keyword>
<keyword id="KW-0501">Molybdenum cofactor biosynthesis</keyword>
<keyword id="KW-1185">Reference proteome</keyword>
<keyword id="KW-0808">Transferase</keyword>
<name>MOAE_ECOLI</name>
<proteinExistence type="evidence at protein level"/>